<keyword id="KW-0963">Cytoplasm</keyword>
<keyword id="KW-0251">Elongation factor</keyword>
<keyword id="KW-0648">Protein biosynthesis</keyword>
<keyword id="KW-1185">Reference proteome</keyword>
<proteinExistence type="inferred from homology"/>
<comment type="function">
    <text evidence="1">Associates with the EF-Tu.GDP complex and induces the exchange of GDP to GTP. It remains bound to the aminoacyl-tRNA.EF-Tu.GTP complex up to the GTP hydrolysis stage on the ribosome.</text>
</comment>
<comment type="subcellular location">
    <subcellularLocation>
        <location evidence="1">Cytoplasm</location>
    </subcellularLocation>
</comment>
<comment type="similarity">
    <text evidence="1">Belongs to the EF-Ts family.</text>
</comment>
<gene>
    <name evidence="1" type="primary">tsf</name>
    <name type="ordered locus">CPE1699</name>
</gene>
<protein>
    <recommendedName>
        <fullName evidence="1">Elongation factor Ts</fullName>
        <shortName evidence="1">EF-Ts</shortName>
    </recommendedName>
</protein>
<name>EFTS_CLOPE</name>
<organism>
    <name type="scientific">Clostridium perfringens (strain 13 / Type A)</name>
    <dbReference type="NCBI Taxonomy" id="195102"/>
    <lineage>
        <taxon>Bacteria</taxon>
        <taxon>Bacillati</taxon>
        <taxon>Bacillota</taxon>
        <taxon>Clostridia</taxon>
        <taxon>Eubacteriales</taxon>
        <taxon>Clostridiaceae</taxon>
        <taxon>Clostridium</taxon>
    </lineage>
</organism>
<accession>Q8XJQ7</accession>
<feature type="chain" id="PRO_0000161108" description="Elongation factor Ts">
    <location>
        <begin position="1"/>
        <end position="303"/>
    </location>
</feature>
<feature type="region of interest" description="Involved in Mg(2+) ion dislocation from EF-Tu" evidence="1">
    <location>
        <begin position="80"/>
        <end position="83"/>
    </location>
</feature>
<dbReference type="EMBL" id="BA000016">
    <property type="protein sequence ID" value="BAB81405.1"/>
    <property type="molecule type" value="Genomic_DNA"/>
</dbReference>
<dbReference type="RefSeq" id="WP_003459744.1">
    <property type="nucleotide sequence ID" value="NC_003366.1"/>
</dbReference>
<dbReference type="SMR" id="Q8XJQ7"/>
<dbReference type="STRING" id="195102.gene:10490963"/>
<dbReference type="GeneID" id="93001763"/>
<dbReference type="KEGG" id="cpe:CPE1699"/>
<dbReference type="HOGENOM" id="CLU_047155_2_0_9"/>
<dbReference type="Proteomes" id="UP000000818">
    <property type="component" value="Chromosome"/>
</dbReference>
<dbReference type="GO" id="GO:0005737">
    <property type="term" value="C:cytoplasm"/>
    <property type="evidence" value="ECO:0007669"/>
    <property type="project" value="UniProtKB-SubCell"/>
</dbReference>
<dbReference type="GO" id="GO:0003746">
    <property type="term" value="F:translation elongation factor activity"/>
    <property type="evidence" value="ECO:0007669"/>
    <property type="project" value="UniProtKB-UniRule"/>
</dbReference>
<dbReference type="CDD" id="cd14275">
    <property type="entry name" value="UBA_EF-Ts"/>
    <property type="match status" value="1"/>
</dbReference>
<dbReference type="FunFam" id="1.10.286.20:FF:000001">
    <property type="entry name" value="Elongation factor Ts"/>
    <property type="match status" value="1"/>
</dbReference>
<dbReference type="FunFam" id="1.10.8.10:FF:000001">
    <property type="entry name" value="Elongation factor Ts"/>
    <property type="match status" value="1"/>
</dbReference>
<dbReference type="Gene3D" id="1.10.286.20">
    <property type="match status" value="1"/>
</dbReference>
<dbReference type="Gene3D" id="1.10.8.10">
    <property type="entry name" value="DNA helicase RuvA subunit, C-terminal domain"/>
    <property type="match status" value="1"/>
</dbReference>
<dbReference type="Gene3D" id="3.30.479.20">
    <property type="entry name" value="Elongation factor Ts, dimerisation domain"/>
    <property type="match status" value="2"/>
</dbReference>
<dbReference type="HAMAP" id="MF_00050">
    <property type="entry name" value="EF_Ts"/>
    <property type="match status" value="1"/>
</dbReference>
<dbReference type="InterPro" id="IPR036402">
    <property type="entry name" value="EF-Ts_dimer_sf"/>
</dbReference>
<dbReference type="InterPro" id="IPR001816">
    <property type="entry name" value="Transl_elong_EFTs/EF1B"/>
</dbReference>
<dbReference type="InterPro" id="IPR014039">
    <property type="entry name" value="Transl_elong_EFTs/EF1B_dimer"/>
</dbReference>
<dbReference type="InterPro" id="IPR018101">
    <property type="entry name" value="Transl_elong_Ts_CS"/>
</dbReference>
<dbReference type="InterPro" id="IPR009060">
    <property type="entry name" value="UBA-like_sf"/>
</dbReference>
<dbReference type="NCBIfam" id="TIGR00116">
    <property type="entry name" value="tsf"/>
    <property type="match status" value="1"/>
</dbReference>
<dbReference type="PANTHER" id="PTHR11741">
    <property type="entry name" value="ELONGATION FACTOR TS"/>
    <property type="match status" value="1"/>
</dbReference>
<dbReference type="PANTHER" id="PTHR11741:SF0">
    <property type="entry name" value="ELONGATION FACTOR TS, MITOCHONDRIAL"/>
    <property type="match status" value="1"/>
</dbReference>
<dbReference type="Pfam" id="PF00889">
    <property type="entry name" value="EF_TS"/>
    <property type="match status" value="1"/>
</dbReference>
<dbReference type="SUPFAM" id="SSF54713">
    <property type="entry name" value="Elongation factor Ts (EF-Ts), dimerisation domain"/>
    <property type="match status" value="2"/>
</dbReference>
<dbReference type="SUPFAM" id="SSF46934">
    <property type="entry name" value="UBA-like"/>
    <property type="match status" value="1"/>
</dbReference>
<dbReference type="PROSITE" id="PS01126">
    <property type="entry name" value="EF_TS_1"/>
    <property type="match status" value="1"/>
</dbReference>
<dbReference type="PROSITE" id="PS01127">
    <property type="entry name" value="EF_TS_2"/>
    <property type="match status" value="1"/>
</dbReference>
<reference key="1">
    <citation type="journal article" date="2002" name="Proc. Natl. Acad. Sci. U.S.A.">
        <title>Complete genome sequence of Clostridium perfringens, an anaerobic flesh-eater.</title>
        <authorList>
            <person name="Shimizu T."/>
            <person name="Ohtani K."/>
            <person name="Hirakawa H."/>
            <person name="Ohshima K."/>
            <person name="Yamashita A."/>
            <person name="Shiba T."/>
            <person name="Ogasawara N."/>
            <person name="Hattori M."/>
            <person name="Kuhara S."/>
            <person name="Hayashi H."/>
        </authorList>
    </citation>
    <scope>NUCLEOTIDE SEQUENCE [LARGE SCALE GENOMIC DNA]</scope>
    <source>
        <strain>13 / Type A</strain>
    </source>
</reference>
<evidence type="ECO:0000255" key="1">
    <source>
        <dbReference type="HAMAP-Rule" id="MF_00050"/>
    </source>
</evidence>
<sequence>MITAKAVKELRERTGAGMMDCKKALTETNGDMEKAVEVLREKGLAAAAKKAGRVAAEGIVKTYVSEDMKKGSIVEINCETDFVALNEEFVGFAGRVAELVANSNVNTVEELLAEKLDGDKTVQEVLTELIAKIGENMSVRRFERFSVESGLVQSYIHGGGRIGVMAELACEASSPVLAEVAKDVCMQIAAANPLFLSEADVDQESLEKEKEIYRAQALNEGKPEHIVDKMVMGRIKKYCKEVCLLDQAWVKDGDKSIAKLLEEKSKEVGSPITITKFVRFERGEGIEKKEENFAEEVAKMGGK</sequence>